<gene>
    <name evidence="1" type="primary">rimP</name>
    <name type="ordered locus">LAR_0668</name>
</gene>
<dbReference type="EMBL" id="AP007281">
    <property type="protein sequence ID" value="BAG25184.1"/>
    <property type="molecule type" value="Genomic_DNA"/>
</dbReference>
<dbReference type="SMR" id="B2G6V2"/>
<dbReference type="KEGG" id="lrf:LAR_0668"/>
<dbReference type="HOGENOM" id="CLU_070525_2_0_9"/>
<dbReference type="GO" id="GO:0005829">
    <property type="term" value="C:cytosol"/>
    <property type="evidence" value="ECO:0007669"/>
    <property type="project" value="TreeGrafter"/>
</dbReference>
<dbReference type="GO" id="GO:0000028">
    <property type="term" value="P:ribosomal small subunit assembly"/>
    <property type="evidence" value="ECO:0007669"/>
    <property type="project" value="TreeGrafter"/>
</dbReference>
<dbReference type="GO" id="GO:0006412">
    <property type="term" value="P:translation"/>
    <property type="evidence" value="ECO:0007669"/>
    <property type="project" value="TreeGrafter"/>
</dbReference>
<dbReference type="CDD" id="cd01734">
    <property type="entry name" value="YlxS_C"/>
    <property type="match status" value="1"/>
</dbReference>
<dbReference type="FunFam" id="3.30.300.70:FF:000001">
    <property type="entry name" value="Ribosome maturation factor RimP"/>
    <property type="match status" value="1"/>
</dbReference>
<dbReference type="Gene3D" id="2.30.30.180">
    <property type="entry name" value="Ribosome maturation factor RimP, C-terminal domain"/>
    <property type="match status" value="1"/>
</dbReference>
<dbReference type="Gene3D" id="3.30.300.70">
    <property type="entry name" value="RimP-like superfamily, N-terminal"/>
    <property type="match status" value="1"/>
</dbReference>
<dbReference type="HAMAP" id="MF_01077">
    <property type="entry name" value="RimP"/>
    <property type="match status" value="1"/>
</dbReference>
<dbReference type="InterPro" id="IPR003728">
    <property type="entry name" value="Ribosome_maturation_RimP"/>
</dbReference>
<dbReference type="InterPro" id="IPR028998">
    <property type="entry name" value="RimP_C"/>
</dbReference>
<dbReference type="InterPro" id="IPR036847">
    <property type="entry name" value="RimP_C_sf"/>
</dbReference>
<dbReference type="InterPro" id="IPR028989">
    <property type="entry name" value="RimP_N"/>
</dbReference>
<dbReference type="InterPro" id="IPR035956">
    <property type="entry name" value="RimP_N_sf"/>
</dbReference>
<dbReference type="NCBIfam" id="NF000928">
    <property type="entry name" value="PRK00092.1-2"/>
    <property type="match status" value="1"/>
</dbReference>
<dbReference type="PANTHER" id="PTHR33867">
    <property type="entry name" value="RIBOSOME MATURATION FACTOR RIMP"/>
    <property type="match status" value="1"/>
</dbReference>
<dbReference type="PANTHER" id="PTHR33867:SF1">
    <property type="entry name" value="RIBOSOME MATURATION FACTOR RIMP"/>
    <property type="match status" value="1"/>
</dbReference>
<dbReference type="Pfam" id="PF17384">
    <property type="entry name" value="DUF150_C"/>
    <property type="match status" value="1"/>
</dbReference>
<dbReference type="Pfam" id="PF02576">
    <property type="entry name" value="RimP_N"/>
    <property type="match status" value="1"/>
</dbReference>
<dbReference type="SUPFAM" id="SSF74942">
    <property type="entry name" value="YhbC-like, C-terminal domain"/>
    <property type="match status" value="1"/>
</dbReference>
<dbReference type="SUPFAM" id="SSF75420">
    <property type="entry name" value="YhbC-like, N-terminal domain"/>
    <property type="match status" value="1"/>
</dbReference>
<keyword id="KW-0963">Cytoplasm</keyword>
<keyword id="KW-0690">Ribosome biogenesis</keyword>
<reference key="1">
    <citation type="journal article" date="2008" name="DNA Res.">
        <title>Comparative genome analysis of Lactobacillus reuteri and Lactobacillus fermentum reveal a genomic island for reuterin and cobalamin production.</title>
        <authorList>
            <person name="Morita H."/>
            <person name="Toh H."/>
            <person name="Fukuda S."/>
            <person name="Horikawa H."/>
            <person name="Oshima K."/>
            <person name="Suzuki T."/>
            <person name="Murakami M."/>
            <person name="Hisamatsu S."/>
            <person name="Kato Y."/>
            <person name="Takizawa T."/>
            <person name="Fukuoka H."/>
            <person name="Yoshimura T."/>
            <person name="Itoh K."/>
            <person name="O'Sullivan D.J."/>
            <person name="McKay L.L."/>
            <person name="Ohno H."/>
            <person name="Kikuchi J."/>
            <person name="Masaoka T."/>
            <person name="Hattori M."/>
        </authorList>
    </citation>
    <scope>NUCLEOTIDE SEQUENCE [LARGE SCALE GENOMIC DNA]</scope>
    <source>
        <strain>JCM 1112</strain>
    </source>
</reference>
<accession>B2G6V2</accession>
<protein>
    <recommendedName>
        <fullName evidence="1">Ribosome maturation factor RimP</fullName>
    </recommendedName>
</protein>
<organism>
    <name type="scientific">Limosilactobacillus reuteri subsp. reuteri (strain JCM 1112)</name>
    <name type="common">Lactobacillus reuteri</name>
    <dbReference type="NCBI Taxonomy" id="557433"/>
    <lineage>
        <taxon>Bacteria</taxon>
        <taxon>Bacillati</taxon>
        <taxon>Bacillota</taxon>
        <taxon>Bacilli</taxon>
        <taxon>Lactobacillales</taxon>
        <taxon>Lactobacillaceae</taxon>
        <taxon>Limosilactobacillus</taxon>
    </lineage>
</organism>
<name>RIMP_LIMRJ</name>
<feature type="chain" id="PRO_1000136773" description="Ribosome maturation factor RimP">
    <location>
        <begin position="1"/>
        <end position="157"/>
    </location>
</feature>
<sequence length="157" mass="18184">MSSVVETVTDLVTPILQDHDFYLYDLEFVKEGKSWYLRVYINKDGGITLEDCALVSDELSEALDNVEPDPIPQAYFLEVSSPGAERPLKKEEDYQRAIDHYIHISLYQQINGQKVYEGTLTQLSDKEITLDYLDKTRHRQITIDRQKIAQARLAIKF</sequence>
<comment type="function">
    <text evidence="1">Required for maturation of 30S ribosomal subunits.</text>
</comment>
<comment type="subcellular location">
    <subcellularLocation>
        <location evidence="1">Cytoplasm</location>
    </subcellularLocation>
</comment>
<comment type="similarity">
    <text evidence="1">Belongs to the RimP family.</text>
</comment>
<evidence type="ECO:0000255" key="1">
    <source>
        <dbReference type="HAMAP-Rule" id="MF_01077"/>
    </source>
</evidence>
<proteinExistence type="inferred from homology"/>